<gene>
    <name evidence="1" type="primary">rplD</name>
    <name type="ordered locus">SSA_0108</name>
</gene>
<keyword id="KW-1185">Reference proteome</keyword>
<keyword id="KW-0687">Ribonucleoprotein</keyword>
<keyword id="KW-0689">Ribosomal protein</keyword>
<keyword id="KW-0694">RNA-binding</keyword>
<keyword id="KW-0699">rRNA-binding</keyword>
<reference key="1">
    <citation type="journal article" date="2007" name="J. Bacteriol.">
        <title>Genome of the opportunistic pathogen Streptococcus sanguinis.</title>
        <authorList>
            <person name="Xu P."/>
            <person name="Alves J.M."/>
            <person name="Kitten T."/>
            <person name="Brown A."/>
            <person name="Chen Z."/>
            <person name="Ozaki L.S."/>
            <person name="Manque P."/>
            <person name="Ge X."/>
            <person name="Serrano M.G."/>
            <person name="Puiu D."/>
            <person name="Hendricks S."/>
            <person name="Wang Y."/>
            <person name="Chaplin M.D."/>
            <person name="Akan D."/>
            <person name="Paik S."/>
            <person name="Peterson D.L."/>
            <person name="Macrina F.L."/>
            <person name="Buck G.A."/>
        </authorList>
    </citation>
    <scope>NUCLEOTIDE SEQUENCE [LARGE SCALE GENOMIC DNA]</scope>
    <source>
        <strain>SK36</strain>
    </source>
</reference>
<sequence length="207" mass="22279">MANVKLFDQTGKEAGEVVLNDAVFGIEPNESVVFDVIISQRASLRQGTHAVKNRSAVSGGGRKPWRQKGTGRARQGSIRSPQWRGGGIVFGPTPRSYAYKLPRKVRRLALKSVYSEKVAENKFVAVDSLSFTAPKTAEFAKVLAALSIDTKVLVILEEGNEFAALSARNLPNVKVATATTASVLDIVNSDKLLVTQAAISKIEEVLA</sequence>
<evidence type="ECO:0000255" key="1">
    <source>
        <dbReference type="HAMAP-Rule" id="MF_01328"/>
    </source>
</evidence>
<evidence type="ECO:0000256" key="2">
    <source>
        <dbReference type="SAM" id="MobiDB-lite"/>
    </source>
</evidence>
<evidence type="ECO:0000305" key="3"/>
<comment type="function">
    <text evidence="1">One of the primary rRNA binding proteins, this protein initially binds near the 5'-end of the 23S rRNA. It is important during the early stages of 50S assembly. It makes multiple contacts with different domains of the 23S rRNA in the assembled 50S subunit and ribosome.</text>
</comment>
<comment type="function">
    <text evidence="1">Forms part of the polypeptide exit tunnel.</text>
</comment>
<comment type="subunit">
    <text evidence="1">Part of the 50S ribosomal subunit.</text>
</comment>
<comment type="similarity">
    <text evidence="1">Belongs to the universal ribosomal protein uL4 family.</text>
</comment>
<organism>
    <name type="scientific">Streptococcus sanguinis (strain SK36)</name>
    <dbReference type="NCBI Taxonomy" id="388919"/>
    <lineage>
        <taxon>Bacteria</taxon>
        <taxon>Bacillati</taxon>
        <taxon>Bacillota</taxon>
        <taxon>Bacilli</taxon>
        <taxon>Lactobacillales</taxon>
        <taxon>Streptococcaceae</taxon>
        <taxon>Streptococcus</taxon>
    </lineage>
</organism>
<dbReference type="EMBL" id="CP000387">
    <property type="protein sequence ID" value="ABN43569.1"/>
    <property type="molecule type" value="Genomic_DNA"/>
</dbReference>
<dbReference type="RefSeq" id="WP_002894480.1">
    <property type="nucleotide sequence ID" value="NC_009009.1"/>
</dbReference>
<dbReference type="RefSeq" id="YP_001034119.1">
    <property type="nucleotide sequence ID" value="NC_009009.1"/>
</dbReference>
<dbReference type="SMR" id="A3CK64"/>
<dbReference type="STRING" id="388919.SSA_0108"/>
<dbReference type="KEGG" id="ssa:SSA_0108"/>
<dbReference type="PATRIC" id="fig|388919.9.peg.101"/>
<dbReference type="eggNOG" id="COG0088">
    <property type="taxonomic scope" value="Bacteria"/>
</dbReference>
<dbReference type="HOGENOM" id="CLU_041575_5_2_9"/>
<dbReference type="OrthoDB" id="9803201at2"/>
<dbReference type="Proteomes" id="UP000002148">
    <property type="component" value="Chromosome"/>
</dbReference>
<dbReference type="GO" id="GO:1990904">
    <property type="term" value="C:ribonucleoprotein complex"/>
    <property type="evidence" value="ECO:0007669"/>
    <property type="project" value="UniProtKB-KW"/>
</dbReference>
<dbReference type="GO" id="GO:0005840">
    <property type="term" value="C:ribosome"/>
    <property type="evidence" value="ECO:0007669"/>
    <property type="project" value="UniProtKB-KW"/>
</dbReference>
<dbReference type="GO" id="GO:0019843">
    <property type="term" value="F:rRNA binding"/>
    <property type="evidence" value="ECO:0007669"/>
    <property type="project" value="UniProtKB-UniRule"/>
</dbReference>
<dbReference type="GO" id="GO:0003735">
    <property type="term" value="F:structural constituent of ribosome"/>
    <property type="evidence" value="ECO:0007669"/>
    <property type="project" value="InterPro"/>
</dbReference>
<dbReference type="GO" id="GO:0006412">
    <property type="term" value="P:translation"/>
    <property type="evidence" value="ECO:0007669"/>
    <property type="project" value="UniProtKB-UniRule"/>
</dbReference>
<dbReference type="FunFam" id="3.40.1370.10:FF:000003">
    <property type="entry name" value="50S ribosomal protein L4"/>
    <property type="match status" value="1"/>
</dbReference>
<dbReference type="Gene3D" id="3.40.1370.10">
    <property type="match status" value="1"/>
</dbReference>
<dbReference type="HAMAP" id="MF_01328_B">
    <property type="entry name" value="Ribosomal_uL4_B"/>
    <property type="match status" value="1"/>
</dbReference>
<dbReference type="InterPro" id="IPR002136">
    <property type="entry name" value="Ribosomal_uL4"/>
</dbReference>
<dbReference type="InterPro" id="IPR013005">
    <property type="entry name" value="Ribosomal_uL4-like"/>
</dbReference>
<dbReference type="InterPro" id="IPR023574">
    <property type="entry name" value="Ribosomal_uL4_dom_sf"/>
</dbReference>
<dbReference type="NCBIfam" id="TIGR03953">
    <property type="entry name" value="rplD_bact"/>
    <property type="match status" value="1"/>
</dbReference>
<dbReference type="PANTHER" id="PTHR10746">
    <property type="entry name" value="50S RIBOSOMAL PROTEIN L4"/>
    <property type="match status" value="1"/>
</dbReference>
<dbReference type="PANTHER" id="PTHR10746:SF6">
    <property type="entry name" value="LARGE RIBOSOMAL SUBUNIT PROTEIN UL4M"/>
    <property type="match status" value="1"/>
</dbReference>
<dbReference type="Pfam" id="PF00573">
    <property type="entry name" value="Ribosomal_L4"/>
    <property type="match status" value="1"/>
</dbReference>
<dbReference type="SUPFAM" id="SSF52166">
    <property type="entry name" value="Ribosomal protein L4"/>
    <property type="match status" value="1"/>
</dbReference>
<name>RL4_STRSV</name>
<proteinExistence type="inferred from homology"/>
<protein>
    <recommendedName>
        <fullName evidence="1">Large ribosomal subunit protein uL4</fullName>
    </recommendedName>
    <alternativeName>
        <fullName evidence="3">50S ribosomal protein L4</fullName>
    </alternativeName>
</protein>
<feature type="chain" id="PRO_1000052514" description="Large ribosomal subunit protein uL4">
    <location>
        <begin position="1"/>
        <end position="207"/>
    </location>
</feature>
<feature type="region of interest" description="Disordered" evidence="2">
    <location>
        <begin position="49"/>
        <end position="78"/>
    </location>
</feature>
<accession>A3CK64</accession>